<feature type="chain" id="PRO_0000210275" description="Protein SSO2">
    <location>
        <begin position="1"/>
        <end position="295"/>
    </location>
</feature>
<feature type="topological domain" description="Cytoplasmic" evidence="1">
    <location>
        <begin position="1"/>
        <end position="269"/>
    </location>
</feature>
<feature type="transmembrane region" description="Helical; Anchor for type IV membrane protein" evidence="1">
    <location>
        <begin position="270"/>
        <end position="291"/>
    </location>
</feature>
<feature type="topological domain" description="Extracellular" evidence="1">
    <location>
        <begin position="292"/>
        <end position="295"/>
    </location>
</feature>
<feature type="domain" description="t-SNARE coiled-coil homology" evidence="2">
    <location>
        <begin position="194"/>
        <end position="256"/>
    </location>
</feature>
<feature type="coiled-coil region" evidence="1">
    <location>
        <begin position="39"/>
        <end position="100"/>
    </location>
</feature>
<feature type="modified residue" description="Phosphoserine" evidence="5">
    <location>
        <position position="31"/>
    </location>
</feature>
<feature type="modified residue" description="Phosphoserine" evidence="5">
    <location>
        <position position="34"/>
    </location>
</feature>
<feature type="sequence conflict" description="In Ref. 1; CAA47960." evidence="4" ref="1">
    <original>E</original>
    <variation>K</variation>
    <location>
        <position position="222"/>
    </location>
</feature>
<feature type="helix" evidence="8">
    <location>
        <begin position="36"/>
        <end position="69"/>
    </location>
</feature>
<feature type="helix" evidence="8">
    <location>
        <begin position="74"/>
        <end position="108"/>
    </location>
</feature>
<feature type="turn" evidence="8">
    <location>
        <begin position="109"/>
        <end position="111"/>
    </location>
</feature>
<feature type="helix" evidence="8">
    <location>
        <begin position="113"/>
        <end position="148"/>
    </location>
</feature>
<feature type="strand" evidence="6">
    <location>
        <begin position="157"/>
        <end position="159"/>
    </location>
</feature>
<feature type="helix" evidence="7">
    <location>
        <begin position="161"/>
        <end position="168"/>
    </location>
</feature>
<feature type="strand" evidence="7">
    <location>
        <begin position="169"/>
        <end position="172"/>
    </location>
</feature>
<feature type="turn" evidence="6">
    <location>
        <begin position="174"/>
        <end position="177"/>
    </location>
</feature>
<feature type="helix" evidence="6">
    <location>
        <begin position="193"/>
        <end position="195"/>
    </location>
</feature>
<feature type="helix" evidence="8">
    <location>
        <begin position="199"/>
        <end position="222"/>
    </location>
</feature>
<sequence length="295" mass="33734">MSNANPYENNNPYAENYEMQEDLNNAPTGHSDGSDDFVAFMNKINSINANLSRYENIINQIDAQHKDLLTQVSEEQEMELRRSLDDYISQATDLQYQLKADIKDAQRDGLHDSNKQAQAENCRQKFLKLIQDYRIIDSNYKEESKEQAKRQYTIIQPEATDEEVEAAINDVNGQQIFSQALLNANRRGEAKTALAEVQARHQELLKLEKTMAELTQLFNDMEELVIEQQENVDVIDKNVEDAQQDVEQGVGHTNKAVKSARKARKNKIRCLIICFIIFAIVVVVVVVPSVVETRK</sequence>
<evidence type="ECO:0000255" key="1"/>
<evidence type="ECO:0000255" key="2">
    <source>
        <dbReference type="PROSITE-ProRule" id="PRU00202"/>
    </source>
</evidence>
<evidence type="ECO:0000269" key="3">
    <source>
    </source>
</evidence>
<evidence type="ECO:0000305" key="4"/>
<evidence type="ECO:0007744" key="5">
    <source>
    </source>
</evidence>
<evidence type="ECO:0007829" key="6">
    <source>
        <dbReference type="PDB" id="5LG4"/>
    </source>
</evidence>
<evidence type="ECO:0007829" key="7">
    <source>
        <dbReference type="PDB" id="5M4Y"/>
    </source>
</evidence>
<evidence type="ECO:0007829" key="8">
    <source>
        <dbReference type="PDB" id="7Q83"/>
    </source>
</evidence>
<reference key="1">
    <citation type="journal article" date="1993" name="EMBO J.">
        <title>Yeast syntaxins Sso1p and Sso2p belong to a family of related membrane proteins that function in vesicular transport.</title>
        <authorList>
            <person name="Aalto M.K."/>
            <person name="Ronne H."/>
            <person name="Keraenen S."/>
        </authorList>
    </citation>
    <scope>NUCLEOTIDE SEQUENCE [MRNA]</scope>
    <source>
        <strain>ATCC 26787 / X2180-1B</strain>
    </source>
</reference>
<reference key="2">
    <citation type="journal article" date="1997" name="Nature">
        <title>The nucleotide sequence of Saccharomyces cerevisiae chromosome XIII.</title>
        <authorList>
            <person name="Bowman S."/>
            <person name="Churcher C.M."/>
            <person name="Badcock K."/>
            <person name="Brown D."/>
            <person name="Chillingworth T."/>
            <person name="Connor R."/>
            <person name="Dedman K."/>
            <person name="Devlin K."/>
            <person name="Gentles S."/>
            <person name="Hamlin N."/>
            <person name="Hunt S."/>
            <person name="Jagels K."/>
            <person name="Lye G."/>
            <person name="Moule S."/>
            <person name="Odell C."/>
            <person name="Pearson D."/>
            <person name="Rajandream M.A."/>
            <person name="Rice P."/>
            <person name="Skelton J."/>
            <person name="Walsh S.V."/>
            <person name="Whitehead S."/>
            <person name="Barrell B.G."/>
        </authorList>
    </citation>
    <scope>NUCLEOTIDE SEQUENCE [LARGE SCALE GENOMIC DNA]</scope>
    <source>
        <strain>ATCC 204508 / S288c</strain>
    </source>
</reference>
<reference key="3">
    <citation type="journal article" date="2014" name="G3 (Bethesda)">
        <title>The reference genome sequence of Saccharomyces cerevisiae: Then and now.</title>
        <authorList>
            <person name="Engel S.R."/>
            <person name="Dietrich F.S."/>
            <person name="Fisk D.G."/>
            <person name="Binkley G."/>
            <person name="Balakrishnan R."/>
            <person name="Costanzo M.C."/>
            <person name="Dwight S.S."/>
            <person name="Hitz B.C."/>
            <person name="Karra K."/>
            <person name="Nash R.S."/>
            <person name="Weng S."/>
            <person name="Wong E.D."/>
            <person name="Lloyd P."/>
            <person name="Skrzypek M.S."/>
            <person name="Miyasato S.R."/>
            <person name="Simison M."/>
            <person name="Cherry J.M."/>
        </authorList>
    </citation>
    <scope>GENOME REANNOTATION</scope>
    <source>
        <strain>ATCC 204508 / S288c</strain>
    </source>
</reference>
<reference key="4">
    <citation type="journal article" date="2003" name="Nature">
        <title>Global analysis of protein expression in yeast.</title>
        <authorList>
            <person name="Ghaemmaghami S."/>
            <person name="Huh W.-K."/>
            <person name="Bower K."/>
            <person name="Howson R.W."/>
            <person name="Belle A."/>
            <person name="Dephoure N."/>
            <person name="O'Shea E.K."/>
            <person name="Weissman J.S."/>
        </authorList>
    </citation>
    <scope>LEVEL OF PROTEIN EXPRESSION [LARGE SCALE ANALYSIS]</scope>
</reference>
<reference key="5">
    <citation type="journal article" date="2008" name="Mol. Cell. Proteomics">
        <title>A multidimensional chromatography technology for in-depth phosphoproteome analysis.</title>
        <authorList>
            <person name="Albuquerque C.P."/>
            <person name="Smolka M.B."/>
            <person name="Payne S.H."/>
            <person name="Bafna V."/>
            <person name="Eng J."/>
            <person name="Zhou H."/>
        </authorList>
    </citation>
    <scope>PHOSPHORYLATION [LARGE SCALE ANALYSIS] AT SER-31 AND SER-34</scope>
    <scope>IDENTIFICATION BY MASS SPECTROMETRY [LARGE SCALE ANALYSIS]</scope>
</reference>
<proteinExistence type="evidence at protein level"/>
<dbReference type="EMBL" id="X67730">
    <property type="protein sequence ID" value="CAA47960.1"/>
    <property type="molecule type" value="mRNA"/>
</dbReference>
<dbReference type="EMBL" id="Z49808">
    <property type="protein sequence ID" value="CAA89916.1"/>
    <property type="molecule type" value="Genomic_DNA"/>
</dbReference>
<dbReference type="EMBL" id="BK006946">
    <property type="protein sequence ID" value="DAA10081.1"/>
    <property type="molecule type" value="Genomic_DNA"/>
</dbReference>
<dbReference type="PIR" id="S55130">
    <property type="entry name" value="S55130"/>
</dbReference>
<dbReference type="RefSeq" id="NP_013908.1">
    <property type="nucleotide sequence ID" value="NM_001182689.1"/>
</dbReference>
<dbReference type="PDB" id="5LG4">
    <property type="method" value="X-ray"/>
    <property type="resolution" value="2.90 A"/>
    <property type="chains" value="A=36-227"/>
</dbReference>
<dbReference type="PDB" id="5M4Y">
    <property type="method" value="X-ray"/>
    <property type="resolution" value="2.20 A"/>
    <property type="chains" value="A/C/E=36-227"/>
</dbReference>
<dbReference type="PDB" id="7Q83">
    <property type="method" value="X-ray"/>
    <property type="resolution" value="2.19 A"/>
    <property type="chains" value="B/D=1-270"/>
</dbReference>
<dbReference type="PDBsum" id="5LG4"/>
<dbReference type="PDBsum" id="5M4Y"/>
<dbReference type="PDBsum" id="7Q83"/>
<dbReference type="SMR" id="P39926"/>
<dbReference type="BioGRID" id="35361">
    <property type="interactions" value="403"/>
</dbReference>
<dbReference type="ComplexPortal" id="CPX-1369">
    <property type="entry name" value="Vesicular SNARE complex SSO2-SEC9-SNC1"/>
</dbReference>
<dbReference type="ComplexPortal" id="CPX-5465">
    <property type="entry name" value="Vesicular SNARE complex SSO2-SEC9-SNC2"/>
</dbReference>
<dbReference type="DIP" id="DIP-2951N"/>
<dbReference type="FunCoup" id="P39926">
    <property type="interactions" value="652"/>
</dbReference>
<dbReference type="IntAct" id="P39926">
    <property type="interactions" value="17"/>
</dbReference>
<dbReference type="MINT" id="P39926"/>
<dbReference type="STRING" id="4932.YMR183C"/>
<dbReference type="CarbonylDB" id="P39926"/>
<dbReference type="iPTMnet" id="P39926"/>
<dbReference type="SwissPalm" id="P39926"/>
<dbReference type="PaxDb" id="4932-YMR183C"/>
<dbReference type="PeptideAtlas" id="P39926"/>
<dbReference type="EnsemblFungi" id="YMR183C_mRNA">
    <property type="protein sequence ID" value="YMR183C"/>
    <property type="gene ID" value="YMR183C"/>
</dbReference>
<dbReference type="GeneID" id="855221"/>
<dbReference type="KEGG" id="sce:YMR183C"/>
<dbReference type="AGR" id="SGD:S000004795"/>
<dbReference type="SGD" id="S000004795">
    <property type="gene designation" value="SSO2"/>
</dbReference>
<dbReference type="VEuPathDB" id="FungiDB:YMR183C"/>
<dbReference type="eggNOG" id="KOG0810">
    <property type="taxonomic scope" value="Eukaryota"/>
</dbReference>
<dbReference type="GeneTree" id="ENSGT01000000214440"/>
<dbReference type="HOGENOM" id="CLU_042423_0_1_1"/>
<dbReference type="InParanoid" id="P39926"/>
<dbReference type="OMA" id="RWICFIL"/>
<dbReference type="OrthoDB" id="10255013at2759"/>
<dbReference type="BioCyc" id="YEAST:G3O-32871-MONOMER"/>
<dbReference type="Reactome" id="R-SCE-114516">
    <property type="pathway name" value="Disinhibition of SNARE formation"/>
</dbReference>
<dbReference type="Reactome" id="R-SCE-199992">
    <property type="pathway name" value="trans-Golgi Network Vesicle Budding"/>
</dbReference>
<dbReference type="Reactome" id="R-SCE-9609523">
    <property type="pathway name" value="Insertion of tail-anchored proteins into the endoplasmic reticulum membrane"/>
</dbReference>
<dbReference type="BioGRID-ORCS" id="855221">
    <property type="hits" value="2 hits in 10 CRISPR screens"/>
</dbReference>
<dbReference type="PRO" id="PR:P39926"/>
<dbReference type="Proteomes" id="UP000002311">
    <property type="component" value="Chromosome XIII"/>
</dbReference>
<dbReference type="RNAct" id="P39926">
    <property type="molecule type" value="protein"/>
</dbReference>
<dbReference type="GO" id="GO:0071944">
    <property type="term" value="C:cell periphery"/>
    <property type="evidence" value="ECO:0007005"/>
    <property type="project" value="SGD"/>
</dbReference>
<dbReference type="GO" id="GO:0005737">
    <property type="term" value="C:cytoplasm"/>
    <property type="evidence" value="ECO:0007005"/>
    <property type="project" value="SGD"/>
</dbReference>
<dbReference type="GO" id="GO:0012505">
    <property type="term" value="C:endomembrane system"/>
    <property type="evidence" value="ECO:0000318"/>
    <property type="project" value="GO_Central"/>
</dbReference>
<dbReference type="GO" id="GO:0005783">
    <property type="term" value="C:endoplasmic reticulum"/>
    <property type="evidence" value="ECO:0007005"/>
    <property type="project" value="SGD"/>
</dbReference>
<dbReference type="GO" id="GO:0000139">
    <property type="term" value="C:Golgi membrane"/>
    <property type="evidence" value="ECO:0000303"/>
    <property type="project" value="ComplexPortal"/>
</dbReference>
<dbReference type="GO" id="GO:0005886">
    <property type="term" value="C:plasma membrane"/>
    <property type="evidence" value="ECO:0000314"/>
    <property type="project" value="SGD"/>
</dbReference>
<dbReference type="GO" id="GO:0005628">
    <property type="term" value="C:prospore membrane"/>
    <property type="evidence" value="ECO:0000314"/>
    <property type="project" value="SGD"/>
</dbReference>
<dbReference type="GO" id="GO:0031201">
    <property type="term" value="C:SNARE complex"/>
    <property type="evidence" value="ECO:0000353"/>
    <property type="project" value="ComplexPortal"/>
</dbReference>
<dbReference type="GO" id="GO:0070300">
    <property type="term" value="F:phosphatidic acid binding"/>
    <property type="evidence" value="ECO:0000314"/>
    <property type="project" value="SGD"/>
</dbReference>
<dbReference type="GO" id="GO:0005484">
    <property type="term" value="F:SNAP receptor activity"/>
    <property type="evidence" value="ECO:0000353"/>
    <property type="project" value="SGD"/>
</dbReference>
<dbReference type="GO" id="GO:0000149">
    <property type="term" value="F:SNARE binding"/>
    <property type="evidence" value="ECO:0000318"/>
    <property type="project" value="GO_Central"/>
</dbReference>
<dbReference type="GO" id="GO:0031321">
    <property type="term" value="P:ascospore-type prospore assembly"/>
    <property type="evidence" value="ECO:0000316"/>
    <property type="project" value="SGD"/>
</dbReference>
<dbReference type="GO" id="GO:0006887">
    <property type="term" value="P:exocytosis"/>
    <property type="evidence" value="ECO:0000318"/>
    <property type="project" value="GO_Central"/>
</dbReference>
<dbReference type="GO" id="GO:0006893">
    <property type="term" value="P:Golgi to plasma membrane transport"/>
    <property type="evidence" value="ECO:0000304"/>
    <property type="project" value="SGD"/>
</dbReference>
<dbReference type="GO" id="GO:0048210">
    <property type="term" value="P:Golgi vesicle fusion to target membrane"/>
    <property type="evidence" value="ECO:0000303"/>
    <property type="project" value="ComplexPortal"/>
</dbReference>
<dbReference type="GO" id="GO:0006886">
    <property type="term" value="P:intracellular protein transport"/>
    <property type="evidence" value="ECO:0000318"/>
    <property type="project" value="GO_Central"/>
</dbReference>
<dbReference type="GO" id="GO:0048278">
    <property type="term" value="P:vesicle docking"/>
    <property type="evidence" value="ECO:0000318"/>
    <property type="project" value="GO_Central"/>
</dbReference>
<dbReference type="GO" id="GO:0006906">
    <property type="term" value="P:vesicle fusion"/>
    <property type="evidence" value="ECO:0000314"/>
    <property type="project" value="ComplexPortal"/>
</dbReference>
<dbReference type="GO" id="GO:0099500">
    <property type="term" value="P:vesicle fusion to plasma membrane"/>
    <property type="evidence" value="ECO:0000303"/>
    <property type="project" value="ComplexPortal"/>
</dbReference>
<dbReference type="CDD" id="cd15849">
    <property type="entry name" value="SNARE_Sso1"/>
    <property type="match status" value="1"/>
</dbReference>
<dbReference type="CDD" id="cd00179">
    <property type="entry name" value="SynN"/>
    <property type="match status" value="1"/>
</dbReference>
<dbReference type="DisProt" id="DP01504"/>
<dbReference type="FunFam" id="1.20.58.70:FF:000008">
    <property type="entry name" value="Syntaxin family protein"/>
    <property type="match status" value="1"/>
</dbReference>
<dbReference type="Gene3D" id="1.20.58.70">
    <property type="match status" value="1"/>
</dbReference>
<dbReference type="InterPro" id="IPR010989">
    <property type="entry name" value="SNARE"/>
</dbReference>
<dbReference type="InterPro" id="IPR045242">
    <property type="entry name" value="Syntaxin"/>
</dbReference>
<dbReference type="InterPro" id="IPR006012">
    <property type="entry name" value="Syntaxin/epimorphin_CS"/>
</dbReference>
<dbReference type="InterPro" id="IPR006011">
    <property type="entry name" value="Syntaxin_N"/>
</dbReference>
<dbReference type="InterPro" id="IPR000727">
    <property type="entry name" value="T_SNARE_dom"/>
</dbReference>
<dbReference type="PANTHER" id="PTHR19957:SF307">
    <property type="entry name" value="PROTEIN SSO1-RELATED"/>
    <property type="match status" value="1"/>
</dbReference>
<dbReference type="PANTHER" id="PTHR19957">
    <property type="entry name" value="SYNTAXIN"/>
    <property type="match status" value="1"/>
</dbReference>
<dbReference type="Pfam" id="PF05739">
    <property type="entry name" value="SNARE"/>
    <property type="match status" value="1"/>
</dbReference>
<dbReference type="Pfam" id="PF00804">
    <property type="entry name" value="Syntaxin"/>
    <property type="match status" value="1"/>
</dbReference>
<dbReference type="SMART" id="SM00503">
    <property type="entry name" value="SynN"/>
    <property type="match status" value="1"/>
</dbReference>
<dbReference type="SMART" id="SM00397">
    <property type="entry name" value="t_SNARE"/>
    <property type="match status" value="1"/>
</dbReference>
<dbReference type="SUPFAM" id="SSF47661">
    <property type="entry name" value="t-snare proteins"/>
    <property type="match status" value="1"/>
</dbReference>
<dbReference type="PROSITE" id="PS00914">
    <property type="entry name" value="SYNTAXIN"/>
    <property type="match status" value="1"/>
</dbReference>
<dbReference type="PROSITE" id="PS50192">
    <property type="entry name" value="T_SNARE"/>
    <property type="match status" value="1"/>
</dbReference>
<keyword id="KW-0002">3D-structure</keyword>
<keyword id="KW-0175">Coiled coil</keyword>
<keyword id="KW-0472">Membrane</keyword>
<keyword id="KW-0597">Phosphoprotein</keyword>
<keyword id="KW-1185">Reference proteome</keyword>
<keyword id="KW-0812">Transmembrane</keyword>
<keyword id="KW-1133">Transmembrane helix</keyword>
<name>SSO2_YEAST</name>
<organism>
    <name type="scientific">Saccharomyces cerevisiae (strain ATCC 204508 / S288c)</name>
    <name type="common">Baker's yeast</name>
    <dbReference type="NCBI Taxonomy" id="559292"/>
    <lineage>
        <taxon>Eukaryota</taxon>
        <taxon>Fungi</taxon>
        <taxon>Dikarya</taxon>
        <taxon>Ascomycota</taxon>
        <taxon>Saccharomycotina</taxon>
        <taxon>Saccharomycetes</taxon>
        <taxon>Saccharomycetales</taxon>
        <taxon>Saccharomycetaceae</taxon>
        <taxon>Saccharomyces</taxon>
    </lineage>
</organism>
<gene>
    <name type="primary">SSO2</name>
    <name type="ordered locus">YMR183C</name>
    <name type="ORF">YM8010.13C</name>
</gene>
<comment type="function">
    <text>Required for vesicle fusion with the plasma membrane.</text>
</comment>
<comment type="subcellular location">
    <subcellularLocation>
        <location evidence="4">Membrane</location>
        <topology evidence="4">Single-pass type IV membrane protein</topology>
    </subcellularLocation>
</comment>
<comment type="miscellaneous">
    <text evidence="3">Present with 1720 molecules/cell in log phase SD medium.</text>
</comment>
<comment type="similarity">
    <text evidence="4">Belongs to the syntaxin family.</text>
</comment>
<accession>P39926</accession>
<accession>D6W007</accession>
<protein>
    <recommendedName>
        <fullName>Protein SSO2</fullName>
    </recommendedName>
</protein>